<organism>
    <name type="scientific">Shewanella baltica (strain OS185)</name>
    <dbReference type="NCBI Taxonomy" id="402882"/>
    <lineage>
        <taxon>Bacteria</taxon>
        <taxon>Pseudomonadati</taxon>
        <taxon>Pseudomonadota</taxon>
        <taxon>Gammaproteobacteria</taxon>
        <taxon>Alteromonadales</taxon>
        <taxon>Shewanellaceae</taxon>
        <taxon>Shewanella</taxon>
    </lineage>
</organism>
<proteinExistence type="inferred from homology"/>
<dbReference type="EMBL" id="CP000753">
    <property type="protein sequence ID" value="ABS09538.1"/>
    <property type="molecule type" value="Genomic_DNA"/>
</dbReference>
<dbReference type="RefSeq" id="WP_011847566.1">
    <property type="nucleotide sequence ID" value="NC_009665.1"/>
</dbReference>
<dbReference type="SMR" id="A6WRU9"/>
<dbReference type="KEGG" id="sbm:Shew185_3411"/>
<dbReference type="HOGENOM" id="CLU_005965_2_1_6"/>
<dbReference type="GO" id="GO:0005524">
    <property type="term" value="F:ATP binding"/>
    <property type="evidence" value="ECO:0007669"/>
    <property type="project" value="UniProtKB-UniRule"/>
</dbReference>
<dbReference type="GO" id="GO:0140662">
    <property type="term" value="F:ATP-dependent protein folding chaperone"/>
    <property type="evidence" value="ECO:0007669"/>
    <property type="project" value="InterPro"/>
</dbReference>
<dbReference type="GO" id="GO:0051082">
    <property type="term" value="F:unfolded protein binding"/>
    <property type="evidence" value="ECO:0007669"/>
    <property type="project" value="InterPro"/>
</dbReference>
<dbReference type="CDD" id="cd10234">
    <property type="entry name" value="ASKHA_NBD_HSP70_DnaK-like"/>
    <property type="match status" value="1"/>
</dbReference>
<dbReference type="FunFam" id="2.60.34.10:FF:000014">
    <property type="entry name" value="Chaperone protein DnaK HSP70"/>
    <property type="match status" value="1"/>
</dbReference>
<dbReference type="FunFam" id="1.20.1270.10:FF:000001">
    <property type="entry name" value="Molecular chaperone DnaK"/>
    <property type="match status" value="1"/>
</dbReference>
<dbReference type="FunFam" id="3.30.420.40:FF:000004">
    <property type="entry name" value="Molecular chaperone DnaK"/>
    <property type="match status" value="1"/>
</dbReference>
<dbReference type="FunFam" id="3.90.640.10:FF:000003">
    <property type="entry name" value="Molecular chaperone DnaK"/>
    <property type="match status" value="1"/>
</dbReference>
<dbReference type="Gene3D" id="1.20.1270.10">
    <property type="match status" value="1"/>
</dbReference>
<dbReference type="Gene3D" id="3.30.420.40">
    <property type="match status" value="2"/>
</dbReference>
<dbReference type="Gene3D" id="3.90.640.10">
    <property type="entry name" value="Actin, Chain A, domain 4"/>
    <property type="match status" value="1"/>
</dbReference>
<dbReference type="Gene3D" id="2.60.34.10">
    <property type="entry name" value="Substrate Binding Domain Of DNAk, Chain A, domain 1"/>
    <property type="match status" value="1"/>
</dbReference>
<dbReference type="HAMAP" id="MF_00332">
    <property type="entry name" value="DnaK"/>
    <property type="match status" value="1"/>
</dbReference>
<dbReference type="InterPro" id="IPR043129">
    <property type="entry name" value="ATPase_NBD"/>
</dbReference>
<dbReference type="InterPro" id="IPR012725">
    <property type="entry name" value="Chaperone_DnaK"/>
</dbReference>
<dbReference type="InterPro" id="IPR018181">
    <property type="entry name" value="Heat_shock_70_CS"/>
</dbReference>
<dbReference type="InterPro" id="IPR029048">
    <property type="entry name" value="HSP70_C_sf"/>
</dbReference>
<dbReference type="InterPro" id="IPR029047">
    <property type="entry name" value="HSP70_peptide-bd_sf"/>
</dbReference>
<dbReference type="InterPro" id="IPR013126">
    <property type="entry name" value="Hsp_70_fam"/>
</dbReference>
<dbReference type="NCBIfam" id="NF001413">
    <property type="entry name" value="PRK00290.1"/>
    <property type="match status" value="1"/>
</dbReference>
<dbReference type="NCBIfam" id="NF003520">
    <property type="entry name" value="PRK05183.1"/>
    <property type="match status" value="1"/>
</dbReference>
<dbReference type="NCBIfam" id="TIGR02350">
    <property type="entry name" value="prok_dnaK"/>
    <property type="match status" value="1"/>
</dbReference>
<dbReference type="PANTHER" id="PTHR19375">
    <property type="entry name" value="HEAT SHOCK PROTEIN 70KDA"/>
    <property type="match status" value="1"/>
</dbReference>
<dbReference type="Pfam" id="PF00012">
    <property type="entry name" value="HSP70"/>
    <property type="match status" value="1"/>
</dbReference>
<dbReference type="PRINTS" id="PR00301">
    <property type="entry name" value="HEATSHOCK70"/>
</dbReference>
<dbReference type="SUPFAM" id="SSF53067">
    <property type="entry name" value="Actin-like ATPase domain"/>
    <property type="match status" value="2"/>
</dbReference>
<dbReference type="SUPFAM" id="SSF100920">
    <property type="entry name" value="Heat shock protein 70kD (HSP70), peptide-binding domain"/>
    <property type="match status" value="1"/>
</dbReference>
<dbReference type="PROSITE" id="PS00297">
    <property type="entry name" value="HSP70_1"/>
    <property type="match status" value="1"/>
</dbReference>
<dbReference type="PROSITE" id="PS00329">
    <property type="entry name" value="HSP70_2"/>
    <property type="match status" value="1"/>
</dbReference>
<dbReference type="PROSITE" id="PS01036">
    <property type="entry name" value="HSP70_3"/>
    <property type="match status" value="1"/>
</dbReference>
<reference key="1">
    <citation type="submission" date="2007-07" db="EMBL/GenBank/DDBJ databases">
        <title>Complete sequence of chromosome of Shewanella baltica OS185.</title>
        <authorList>
            <consortium name="US DOE Joint Genome Institute"/>
            <person name="Copeland A."/>
            <person name="Lucas S."/>
            <person name="Lapidus A."/>
            <person name="Barry K."/>
            <person name="Glavina del Rio T."/>
            <person name="Dalin E."/>
            <person name="Tice H."/>
            <person name="Pitluck S."/>
            <person name="Sims D."/>
            <person name="Brettin T."/>
            <person name="Bruce D."/>
            <person name="Detter J.C."/>
            <person name="Han C."/>
            <person name="Schmutz J."/>
            <person name="Larimer F."/>
            <person name="Land M."/>
            <person name="Hauser L."/>
            <person name="Kyrpides N."/>
            <person name="Mikhailova N."/>
            <person name="Brettar I."/>
            <person name="Rodrigues J."/>
            <person name="Konstantinidis K."/>
            <person name="Tiedje J."/>
            <person name="Richardson P."/>
        </authorList>
    </citation>
    <scope>NUCLEOTIDE SEQUENCE [LARGE SCALE GENOMIC DNA]</scope>
    <source>
        <strain>OS185</strain>
    </source>
</reference>
<protein>
    <recommendedName>
        <fullName evidence="1">Chaperone protein DnaK</fullName>
    </recommendedName>
    <alternativeName>
        <fullName evidence="1">HSP70</fullName>
    </alternativeName>
    <alternativeName>
        <fullName evidence="1">Heat shock 70 kDa protein</fullName>
    </alternativeName>
    <alternativeName>
        <fullName evidence="1">Heat shock protein 70</fullName>
    </alternativeName>
</protein>
<feature type="chain" id="PRO_1000059660" description="Chaperone protein DnaK">
    <location>
        <begin position="1"/>
        <end position="639"/>
    </location>
</feature>
<feature type="region of interest" description="Disordered" evidence="2">
    <location>
        <begin position="602"/>
        <end position="639"/>
    </location>
</feature>
<feature type="compositionally biased region" description="Acidic residues" evidence="2">
    <location>
        <begin position="625"/>
        <end position="639"/>
    </location>
</feature>
<feature type="modified residue" description="Phosphothreonine; by autocatalysis" evidence="1">
    <location>
        <position position="198"/>
    </location>
</feature>
<evidence type="ECO:0000255" key="1">
    <source>
        <dbReference type="HAMAP-Rule" id="MF_00332"/>
    </source>
</evidence>
<evidence type="ECO:0000256" key="2">
    <source>
        <dbReference type="SAM" id="MobiDB-lite"/>
    </source>
</evidence>
<name>DNAK_SHEB8</name>
<keyword id="KW-0067">ATP-binding</keyword>
<keyword id="KW-0143">Chaperone</keyword>
<keyword id="KW-0547">Nucleotide-binding</keyword>
<keyword id="KW-0597">Phosphoprotein</keyword>
<keyword id="KW-0346">Stress response</keyword>
<accession>A6WRU9</accession>
<gene>
    <name evidence="1" type="primary">dnaK</name>
    <name type="ordered locus">Shew185_3411</name>
</gene>
<comment type="function">
    <text evidence="1">Acts as a chaperone.</text>
</comment>
<comment type="induction">
    <text evidence="1">By stress conditions e.g. heat shock.</text>
</comment>
<comment type="similarity">
    <text evidence="1">Belongs to the heat shock protein 70 family.</text>
</comment>
<sequence>MGKIIGIDLGTTNSCVAVLDGGKARVLENAEGDRTTPSIIAYTDDETIVGSPAKRQAVTNPTNTFFAIKRLIGRRFKDDEVQRDVNIMPFKIIAADNGDAWVESRGNKMAPPQVSAEILKKMKKTAEDFLGEEVTEAVITVPAYFNDSQRQATKDAGRIAGLDVKRIINEPTAAALAYGIDKKQGDNIVAVYDLGGGTFDISIIEIDSNDGDQTFEVLATNGDTHLGGEDFDNRLINYLADEFKKEQGLDLRKDPLAMQRLKEAAEKAKIELSSTNHTEVNLPYITADATGPKHLVIKITRAKLESLVEDLILRTLEPLKVALADADLSVTDINEVILVGGQTRMPKVQEAVTNFFGKEPRKDVNPDEAVAVGAAIQAGVLSGDVKDVLLLDVTPLSLGIETMGSVMTKLIEKNTTIPTKAQQVFSTADDNQSAVTIHVLQGERKQASANKSLGQFNLDGIEPAQRGQPQIEVMFDIDADGILHVSATDKKTGKKQNITIKASSGLSEEEVAQMVRDAEAHADEDKKFEELVQSRNQADGLVHATKKQVEEAGDALPSEDKEKIQAAMDAVDTAIKGNDKEAIEKATQELIEASAKLMEIAQAKSQAQGGDNADAGKQANATADDVVDAEFEEVKDDKK</sequence>